<evidence type="ECO:0000250" key="1"/>
<evidence type="ECO:0000255" key="2"/>
<evidence type="ECO:0000255" key="3">
    <source>
        <dbReference type="PROSITE-ProRule" id="PRU00555"/>
    </source>
</evidence>
<evidence type="ECO:0000269" key="4">
    <source>
    </source>
</evidence>
<evidence type="ECO:0000305" key="5"/>
<gene>
    <name type="primary">plb1</name>
    <name type="ORF">AFUA_4G08720</name>
</gene>
<accession>P0C957</accession>
<accession>Q4WPC0</accession>
<accession>Q6U820</accession>
<accession>Q9P8P5</accession>
<reference key="1">
    <citation type="journal article" date="2004" name="FEMS Microbiol. Lett.">
        <title>Characterisation and expression of phospholipases B from the opportunistic fungus Aspergillus fumigatus.</title>
        <authorList>
            <person name="Shen D.-K."/>
            <person name="Noodeh A.D."/>
            <person name="Kazemi A."/>
            <person name="Grillot R."/>
            <person name="Robson G.D."/>
            <person name="Brugere J.-F."/>
        </authorList>
    </citation>
    <scope>NUCLEOTIDE SEQUENCE [GENOMIC DNA]</scope>
    <scope>VARIANTS ASN-498 AND 590-ASP--LEU-593 DELINS ASN-GLY-THR-VAL</scope>
    <scope>INDUCTION</scope>
    <source>
        <strain>ATCC 90240 / AF-10</strain>
    </source>
</reference>
<reference key="2">
    <citation type="journal article" date="2005" name="Nature">
        <title>Genomic sequence of the pathogenic and allergenic filamentous fungus Aspergillus fumigatus.</title>
        <authorList>
            <person name="Nierman W.C."/>
            <person name="Pain A."/>
            <person name="Anderson M.J."/>
            <person name="Wortman J.R."/>
            <person name="Kim H.S."/>
            <person name="Arroyo J."/>
            <person name="Berriman M."/>
            <person name="Abe K."/>
            <person name="Archer D.B."/>
            <person name="Bermejo C."/>
            <person name="Bennett J.W."/>
            <person name="Bowyer P."/>
            <person name="Chen D."/>
            <person name="Collins M."/>
            <person name="Coulsen R."/>
            <person name="Davies R."/>
            <person name="Dyer P.S."/>
            <person name="Farman M.L."/>
            <person name="Fedorova N."/>
            <person name="Fedorova N.D."/>
            <person name="Feldblyum T.V."/>
            <person name="Fischer R."/>
            <person name="Fosker N."/>
            <person name="Fraser A."/>
            <person name="Garcia J.L."/>
            <person name="Garcia M.J."/>
            <person name="Goble A."/>
            <person name="Goldman G.H."/>
            <person name="Gomi K."/>
            <person name="Griffith-Jones S."/>
            <person name="Gwilliam R."/>
            <person name="Haas B.J."/>
            <person name="Haas H."/>
            <person name="Harris D.E."/>
            <person name="Horiuchi H."/>
            <person name="Huang J."/>
            <person name="Humphray S."/>
            <person name="Jimenez J."/>
            <person name="Keller N."/>
            <person name="Khouri H."/>
            <person name="Kitamoto K."/>
            <person name="Kobayashi T."/>
            <person name="Konzack S."/>
            <person name="Kulkarni R."/>
            <person name="Kumagai T."/>
            <person name="Lafton A."/>
            <person name="Latge J.-P."/>
            <person name="Li W."/>
            <person name="Lord A."/>
            <person name="Lu C."/>
            <person name="Majoros W.H."/>
            <person name="May G.S."/>
            <person name="Miller B.L."/>
            <person name="Mohamoud Y."/>
            <person name="Molina M."/>
            <person name="Monod M."/>
            <person name="Mouyna I."/>
            <person name="Mulligan S."/>
            <person name="Murphy L.D."/>
            <person name="O'Neil S."/>
            <person name="Paulsen I."/>
            <person name="Penalva M.A."/>
            <person name="Pertea M."/>
            <person name="Price C."/>
            <person name="Pritchard B.L."/>
            <person name="Quail M.A."/>
            <person name="Rabbinowitsch E."/>
            <person name="Rawlins N."/>
            <person name="Rajandream M.A."/>
            <person name="Reichard U."/>
            <person name="Renauld H."/>
            <person name="Robson G.D."/>
            <person name="Rodriguez de Cordoba S."/>
            <person name="Rodriguez-Pena J.M."/>
            <person name="Ronning C.M."/>
            <person name="Rutter S."/>
            <person name="Salzberg S.L."/>
            <person name="Sanchez M."/>
            <person name="Sanchez-Ferrero J.C."/>
            <person name="Saunders D."/>
            <person name="Seeger K."/>
            <person name="Squares R."/>
            <person name="Squares S."/>
            <person name="Takeuchi M."/>
            <person name="Tekaia F."/>
            <person name="Turner G."/>
            <person name="Vazquez de Aldana C.R."/>
            <person name="Weidman J."/>
            <person name="White O."/>
            <person name="Woodward J.R."/>
            <person name="Yu J.-H."/>
            <person name="Fraser C.M."/>
            <person name="Galagan J.E."/>
            <person name="Asai K."/>
            <person name="Machida M."/>
            <person name="Hall N."/>
            <person name="Barrell B.G."/>
            <person name="Denning D.W."/>
        </authorList>
    </citation>
    <scope>NUCLEOTIDE SEQUENCE [LARGE SCALE GENOMIC DNA]</scope>
    <source>
        <strain>ATCC MYA-4609 / CBS 101355 / FGSC A1100 / Af293</strain>
    </source>
</reference>
<sequence>MKTTTVACAVAGLLFSCVSGAPDPVHVEIQQRALPNAPDGYTPSTVGCPASRPTIRSAASLSPNETSWLETRRGKTTSAMKDFFNHVKIQDFDAAGYIDRHSSNSSDLPNIGIAVSGGGYRALMNGAGAIKAFDSRTPNSTSAGQLGGLLQSATYLSGLSGGSWLVGSIYINNFTTISALQTHQKGTVWQFQNSIFEGPDGGSIQILDSATYYRDISNAVSGKSDAGYPTSITDYWGRALSYQMINATNGGPSYTWSSIALTDAFQKAEMPMPLVVADGRYPGELLISSNATVYEFNPWEFGTFDPTVFGFAPLEYLGTKFNGGSVPSNESCVRGFDNVGFVMGTSSTLFNQFLLQINSTALPDWLKSVFTDILKDIGENDEDIAQYAPNPFYHFSNTTNPSAAELELDLVDGGEDLQNIPLHPLIQPERHVDVIFAVDSSADTTYSWPNGTALVATYERSLNSSGIANGTSFPAIPDQNTFVNKGLNTRPTFFGCNSSNTTGPSPLIVYLPNYPYTAYSNFSTFQPDYTEQERDSTILNGYDVVTMGNSTRDGNWSTCVGCAILSRSLERTNTNVPEICKQCFQRYCWDGSLNSTTPAGYEPVTILDSAASGIIPSISTVAMAVVFAAWTIF</sequence>
<protein>
    <recommendedName>
        <fullName>Lysophospholipase 1</fullName>
        <ecNumber>3.1.1.5</ecNumber>
    </recommendedName>
    <alternativeName>
        <fullName>Phospholipase B 1</fullName>
    </alternativeName>
</protein>
<feature type="signal peptide" evidence="2">
    <location>
        <begin position="1"/>
        <end position="20"/>
    </location>
</feature>
<feature type="chain" id="PRO_0000245555" description="Lysophospholipase 1">
    <location>
        <begin position="21"/>
        <end position="609"/>
    </location>
</feature>
<feature type="propeptide" id="PRO_0000245556" description="Removed in mature form" evidence="2">
    <location>
        <begin position="610"/>
        <end position="633"/>
    </location>
</feature>
<feature type="domain" description="PLA2c" evidence="3">
    <location>
        <begin position="47"/>
        <end position="594"/>
    </location>
</feature>
<feature type="lipid moiety-binding region" description="GPI-like-anchor amidated serine" evidence="2">
    <location>
        <position position="609"/>
    </location>
</feature>
<feature type="glycosylation site" description="N-linked (GlcNAc...) asparagine" evidence="2">
    <location>
        <position position="64"/>
    </location>
</feature>
<feature type="glycosylation site" description="N-linked (GlcNAc...) asparagine" evidence="2">
    <location>
        <position position="104"/>
    </location>
</feature>
<feature type="glycosylation site" description="N-linked (GlcNAc...) asparagine" evidence="2">
    <location>
        <position position="139"/>
    </location>
</feature>
<feature type="glycosylation site" description="N-linked (GlcNAc...) asparagine" evidence="2">
    <location>
        <position position="173"/>
    </location>
</feature>
<feature type="glycosylation site" description="N-linked (GlcNAc...) asparagine" evidence="2">
    <location>
        <position position="246"/>
    </location>
</feature>
<feature type="glycosylation site" description="N-linked (GlcNAc...) asparagine" evidence="2">
    <location>
        <position position="290"/>
    </location>
</feature>
<feature type="glycosylation site" description="N-linked (GlcNAc...) asparagine" evidence="2">
    <location>
        <position position="329"/>
    </location>
</feature>
<feature type="glycosylation site" description="N-linked (GlcNAc...) asparagine" evidence="2">
    <location>
        <position position="358"/>
    </location>
</feature>
<feature type="glycosylation site" description="N-linked (GlcNAc...) asparagine" evidence="2">
    <location>
        <position position="397"/>
    </location>
</feature>
<feature type="glycosylation site" description="N-linked (GlcNAc...) asparagine" evidence="2">
    <location>
        <position position="450"/>
    </location>
</feature>
<feature type="glycosylation site" description="N-linked (GlcNAc...) asparagine" evidence="2">
    <location>
        <position position="463"/>
    </location>
</feature>
<feature type="glycosylation site" description="N-linked (GlcNAc...) asparagine" evidence="2">
    <location>
        <position position="469"/>
    </location>
</feature>
<feature type="glycosylation site" description="N-linked (GlcNAc...) asparagine" evidence="2">
    <location>
        <position position="497"/>
    </location>
</feature>
<feature type="glycosylation site" description="N-linked (GlcNAc...) asparagine" evidence="2">
    <location>
        <position position="500"/>
    </location>
</feature>
<feature type="glycosylation site" description="N-linked (GlcNAc...) asparagine" evidence="2">
    <location>
        <position position="521"/>
    </location>
</feature>
<feature type="glycosylation site" description="N-linked (GlcNAc...) asparagine" evidence="2">
    <location>
        <position position="549"/>
    </location>
</feature>
<feature type="glycosylation site" description="N-linked (GlcNAc...) asparagine" evidence="2">
    <location>
        <position position="555"/>
    </location>
</feature>
<feature type="glycosylation site" description="N-linked (GlcNAc...) asparagine" evidence="2">
    <location>
        <position position="594"/>
    </location>
</feature>
<feature type="sequence variant" description="In strain: ATCC 90240 / AF-10." evidence="4">
    <original>S</original>
    <variation>N</variation>
    <location>
        <position position="498"/>
    </location>
</feature>
<feature type="sequence variant" description="In strain: ATCC 90240 / AF-10." evidence="4">
    <original>DGSL</original>
    <variation>NGTV</variation>
    <location>
        <begin position="590"/>
        <end position="593"/>
    </location>
</feature>
<proteinExistence type="evidence at transcript level"/>
<name>PLB1_ASPFU</name>
<dbReference type="EC" id="3.1.1.5"/>
<dbReference type="EMBL" id="AF223004">
    <property type="protein sequence ID" value="AAF64038.2"/>
    <property type="molecule type" value="Genomic_DNA"/>
</dbReference>
<dbReference type="EMBL" id="AAHF01000005">
    <property type="protein sequence ID" value="EAL89914.1"/>
    <property type="molecule type" value="Genomic_DNA"/>
</dbReference>
<dbReference type="RefSeq" id="XP_751952.1">
    <property type="nucleotide sequence ID" value="XM_746859.1"/>
</dbReference>
<dbReference type="SMR" id="P0C957"/>
<dbReference type="FunCoup" id="P0C957">
    <property type="interactions" value="79"/>
</dbReference>
<dbReference type="STRING" id="330879.P0C957"/>
<dbReference type="Allergome" id="8989">
    <property type="allergen name" value="Asp f LPL1"/>
</dbReference>
<dbReference type="GlyCosmos" id="P0C957">
    <property type="glycosylation" value="18 sites, No reported glycans"/>
</dbReference>
<dbReference type="EnsemblFungi" id="EAL89914">
    <property type="protein sequence ID" value="EAL89914"/>
    <property type="gene ID" value="AFUA_4G08720"/>
</dbReference>
<dbReference type="GeneID" id="3509318"/>
<dbReference type="KEGG" id="afm:AFUA_4G08720"/>
<dbReference type="VEuPathDB" id="FungiDB:Afu4g08720"/>
<dbReference type="eggNOG" id="KOG1325">
    <property type="taxonomic scope" value="Eukaryota"/>
</dbReference>
<dbReference type="HOGENOM" id="CLU_014602_0_0_1"/>
<dbReference type="InParanoid" id="P0C957"/>
<dbReference type="OMA" id="TDWWGRA"/>
<dbReference type="OrthoDB" id="4084751at2759"/>
<dbReference type="Proteomes" id="UP000002530">
    <property type="component" value="Chromosome 4"/>
</dbReference>
<dbReference type="GO" id="GO:0005829">
    <property type="term" value="C:cytosol"/>
    <property type="evidence" value="ECO:0000318"/>
    <property type="project" value="GO_Central"/>
</dbReference>
<dbReference type="GO" id="GO:0005783">
    <property type="term" value="C:endoplasmic reticulum"/>
    <property type="evidence" value="ECO:0000318"/>
    <property type="project" value="GO_Central"/>
</dbReference>
<dbReference type="GO" id="GO:0005886">
    <property type="term" value="C:plasma membrane"/>
    <property type="evidence" value="ECO:0007669"/>
    <property type="project" value="UniProtKB-SubCell"/>
</dbReference>
<dbReference type="GO" id="GO:0098552">
    <property type="term" value="C:side of membrane"/>
    <property type="evidence" value="ECO:0007669"/>
    <property type="project" value="UniProtKB-KW"/>
</dbReference>
<dbReference type="GO" id="GO:0004622">
    <property type="term" value="F:lysophospholipase activity"/>
    <property type="evidence" value="ECO:0007669"/>
    <property type="project" value="UniProtKB-EC"/>
</dbReference>
<dbReference type="GO" id="GO:0004623">
    <property type="term" value="F:phospholipase A2 activity"/>
    <property type="evidence" value="ECO:0000318"/>
    <property type="project" value="GO_Central"/>
</dbReference>
<dbReference type="GO" id="GO:0046475">
    <property type="term" value="P:glycerophospholipid catabolic process"/>
    <property type="evidence" value="ECO:0000318"/>
    <property type="project" value="GO_Central"/>
</dbReference>
<dbReference type="CDD" id="cd07203">
    <property type="entry name" value="cPLA2_Fungal_PLB"/>
    <property type="match status" value="1"/>
</dbReference>
<dbReference type="FunFam" id="3.40.1090.10:FF:000010">
    <property type="entry name" value="Lysophospholipase"/>
    <property type="match status" value="1"/>
</dbReference>
<dbReference type="Gene3D" id="3.40.1090.10">
    <property type="entry name" value="Cytosolic phospholipase A2 catalytic domain"/>
    <property type="match status" value="1"/>
</dbReference>
<dbReference type="InterPro" id="IPR016035">
    <property type="entry name" value="Acyl_Trfase/lysoPLipase"/>
</dbReference>
<dbReference type="InterPro" id="IPR002642">
    <property type="entry name" value="LysoPLipase_cat_dom"/>
</dbReference>
<dbReference type="PANTHER" id="PTHR10728">
    <property type="entry name" value="CYTOSOLIC PHOSPHOLIPASE A2"/>
    <property type="match status" value="1"/>
</dbReference>
<dbReference type="PANTHER" id="PTHR10728:SF62">
    <property type="entry name" value="LYSOPHOSPHOLIPASE"/>
    <property type="match status" value="1"/>
</dbReference>
<dbReference type="Pfam" id="PF01735">
    <property type="entry name" value="PLA2_B"/>
    <property type="match status" value="1"/>
</dbReference>
<dbReference type="SMART" id="SM00022">
    <property type="entry name" value="PLAc"/>
    <property type="match status" value="1"/>
</dbReference>
<dbReference type="SUPFAM" id="SSF52151">
    <property type="entry name" value="FabD/lysophospholipase-like"/>
    <property type="match status" value="1"/>
</dbReference>
<dbReference type="PROSITE" id="PS51210">
    <property type="entry name" value="PLA2C"/>
    <property type="match status" value="1"/>
</dbReference>
<keyword id="KW-1003">Cell membrane</keyword>
<keyword id="KW-0325">Glycoprotein</keyword>
<keyword id="KW-0336">GPI-anchor</keyword>
<keyword id="KW-0378">Hydrolase</keyword>
<keyword id="KW-0442">Lipid degradation</keyword>
<keyword id="KW-0443">Lipid metabolism</keyword>
<keyword id="KW-0449">Lipoprotein</keyword>
<keyword id="KW-0472">Membrane</keyword>
<keyword id="KW-1185">Reference proteome</keyword>
<keyword id="KW-0732">Signal</keyword>
<comment type="function">
    <text>Catalyzes the release of fatty acids from lysophospholipids.</text>
</comment>
<comment type="catalytic activity">
    <reaction>
        <text>a 1-acyl-sn-glycero-3-phosphocholine + H2O = sn-glycerol 3-phosphocholine + a fatty acid + H(+)</text>
        <dbReference type="Rhea" id="RHEA:15177"/>
        <dbReference type="ChEBI" id="CHEBI:15377"/>
        <dbReference type="ChEBI" id="CHEBI:15378"/>
        <dbReference type="ChEBI" id="CHEBI:16870"/>
        <dbReference type="ChEBI" id="CHEBI:28868"/>
        <dbReference type="ChEBI" id="CHEBI:58168"/>
        <dbReference type="EC" id="3.1.1.5"/>
    </reaction>
</comment>
<comment type="subcellular location">
    <subcellularLocation>
        <location evidence="1">Cell membrane</location>
        <topology evidence="1">Lipid-anchor</topology>
        <topology evidence="1">GPI-anchor</topology>
    </subcellularLocation>
</comment>
<comment type="induction">
    <text evidence="4">Induced by lecithin.</text>
</comment>
<comment type="PTM">
    <text evidence="1">The GPI-like anchor contains a phosphoceramide lipid group.</text>
</comment>
<comment type="similarity">
    <text evidence="5">Belongs to the lysophospholipase family.</text>
</comment>
<organism>
    <name type="scientific">Aspergillus fumigatus (strain ATCC MYA-4609 / CBS 101355 / FGSC A1100 / Af293)</name>
    <name type="common">Neosartorya fumigata</name>
    <dbReference type="NCBI Taxonomy" id="330879"/>
    <lineage>
        <taxon>Eukaryota</taxon>
        <taxon>Fungi</taxon>
        <taxon>Dikarya</taxon>
        <taxon>Ascomycota</taxon>
        <taxon>Pezizomycotina</taxon>
        <taxon>Eurotiomycetes</taxon>
        <taxon>Eurotiomycetidae</taxon>
        <taxon>Eurotiales</taxon>
        <taxon>Aspergillaceae</taxon>
        <taxon>Aspergillus</taxon>
        <taxon>Aspergillus subgen. Fumigati</taxon>
    </lineage>
</organism>